<comment type="function">
    <text evidence="1">Could be a mediator in iron transactions between iron acquisition and iron-requiring processes, such as synthesis and/or repair of Fe-S clusters in biosynthetic enzymes.</text>
</comment>
<comment type="similarity">
    <text evidence="1">Belongs to the Fe(2+)-trafficking protein family.</text>
</comment>
<reference key="1">
    <citation type="submission" date="2006-11" db="EMBL/GenBank/DDBJ databases">
        <title>Identification and characterization of a new conjugation/ type IVA secretion system (trb/tra) of L. pneumophila Corby localized on a mobile genomic island.</title>
        <authorList>
            <person name="Gloeckner G."/>
            <person name="Albert-Weissenberger C."/>
            <person name="Weinmann E."/>
            <person name="Jacobi S."/>
            <person name="Schunder E."/>
            <person name="Steinert M."/>
            <person name="Buchrieser C."/>
            <person name="Hacker J."/>
            <person name="Heuner K."/>
        </authorList>
    </citation>
    <scope>NUCLEOTIDE SEQUENCE [LARGE SCALE GENOMIC DNA]</scope>
    <source>
        <strain>Corby</strain>
    </source>
</reference>
<gene>
    <name type="ordered locus">LPC_1381</name>
</gene>
<name>FETP_LEGPC</name>
<organism>
    <name type="scientific">Legionella pneumophila (strain Corby)</name>
    <dbReference type="NCBI Taxonomy" id="400673"/>
    <lineage>
        <taxon>Bacteria</taxon>
        <taxon>Pseudomonadati</taxon>
        <taxon>Pseudomonadota</taxon>
        <taxon>Gammaproteobacteria</taxon>
        <taxon>Legionellales</taxon>
        <taxon>Legionellaceae</taxon>
        <taxon>Legionella</taxon>
    </lineage>
</organism>
<keyword id="KW-0408">Iron</keyword>
<proteinExistence type="inferred from homology"/>
<sequence length="89" mass="10539">MSRTVFCCKLKQEAEGLEKQPFPGELGKKVFNEVSKQAWNMWLSHQTMLINEYRLNLIEARAREFLKEEMQKYFFGEGSEKPSGYKEIK</sequence>
<dbReference type="EMBL" id="CP000675">
    <property type="protein sequence ID" value="ABQ55335.1"/>
    <property type="molecule type" value="Genomic_DNA"/>
</dbReference>
<dbReference type="RefSeq" id="WP_010947644.1">
    <property type="nucleotide sequence ID" value="NZ_JAPMSS010000005.1"/>
</dbReference>
<dbReference type="SMR" id="A5ID85"/>
<dbReference type="KEGG" id="lpc:LPC_1381"/>
<dbReference type="HOGENOM" id="CLU_170994_0_0_6"/>
<dbReference type="GO" id="GO:0005829">
    <property type="term" value="C:cytosol"/>
    <property type="evidence" value="ECO:0007669"/>
    <property type="project" value="TreeGrafter"/>
</dbReference>
<dbReference type="GO" id="GO:0005506">
    <property type="term" value="F:iron ion binding"/>
    <property type="evidence" value="ECO:0007669"/>
    <property type="project" value="UniProtKB-UniRule"/>
</dbReference>
<dbReference type="GO" id="GO:0034599">
    <property type="term" value="P:cellular response to oxidative stress"/>
    <property type="evidence" value="ECO:0007669"/>
    <property type="project" value="TreeGrafter"/>
</dbReference>
<dbReference type="FunFam" id="1.10.3880.10:FF:000001">
    <property type="entry name" value="Probable Fe(2+)-trafficking protein"/>
    <property type="match status" value="1"/>
</dbReference>
<dbReference type="Gene3D" id="1.10.3880.10">
    <property type="entry name" value="Fe(II) trafficking protein YggX"/>
    <property type="match status" value="1"/>
</dbReference>
<dbReference type="HAMAP" id="MF_00686">
    <property type="entry name" value="Fe_traffic_YggX"/>
    <property type="match status" value="1"/>
</dbReference>
<dbReference type="InterPro" id="IPR007457">
    <property type="entry name" value="Fe_traffick_prot_YggX"/>
</dbReference>
<dbReference type="InterPro" id="IPR036766">
    <property type="entry name" value="Fe_traffick_prot_YggX_sf"/>
</dbReference>
<dbReference type="NCBIfam" id="NF003817">
    <property type="entry name" value="PRK05408.1"/>
    <property type="match status" value="1"/>
</dbReference>
<dbReference type="PANTHER" id="PTHR36965">
    <property type="entry name" value="FE(2+)-TRAFFICKING PROTEIN-RELATED"/>
    <property type="match status" value="1"/>
</dbReference>
<dbReference type="PANTHER" id="PTHR36965:SF1">
    <property type="entry name" value="FE(2+)-TRAFFICKING PROTEIN-RELATED"/>
    <property type="match status" value="1"/>
</dbReference>
<dbReference type="Pfam" id="PF04362">
    <property type="entry name" value="Iron_traffic"/>
    <property type="match status" value="1"/>
</dbReference>
<dbReference type="PIRSF" id="PIRSF029827">
    <property type="entry name" value="Fe_traffic_YggX"/>
    <property type="match status" value="1"/>
</dbReference>
<dbReference type="SUPFAM" id="SSF111148">
    <property type="entry name" value="YggX-like"/>
    <property type="match status" value="1"/>
</dbReference>
<evidence type="ECO:0000255" key="1">
    <source>
        <dbReference type="HAMAP-Rule" id="MF_00686"/>
    </source>
</evidence>
<accession>A5ID85</accession>
<protein>
    <recommendedName>
        <fullName evidence="1">Probable Fe(2+)-trafficking protein</fullName>
    </recommendedName>
</protein>
<feature type="chain" id="PRO_1000045044" description="Probable Fe(2+)-trafficking protein">
    <location>
        <begin position="1"/>
        <end position="89"/>
    </location>
</feature>